<dbReference type="EMBL" id="LT708304">
    <property type="protein sequence ID" value="SIU00537.1"/>
    <property type="molecule type" value="Genomic_DNA"/>
</dbReference>
<dbReference type="RefSeq" id="NP_855585.1">
    <property type="nucleotide sequence ID" value="NC_002945.3"/>
</dbReference>
<dbReference type="SMR" id="Q7TZB9"/>
<dbReference type="KEGG" id="mbo:BQ2027_MB1934C"/>
<dbReference type="PATRIC" id="fig|233413.5.peg.2121"/>
<dbReference type="Proteomes" id="UP000001419">
    <property type="component" value="Chromosome"/>
</dbReference>
<dbReference type="Gene3D" id="3.40.220.10">
    <property type="entry name" value="Leucine Aminopeptidase, subunit E, domain 1"/>
    <property type="match status" value="1"/>
</dbReference>
<dbReference type="InterPro" id="IPR002589">
    <property type="entry name" value="Macro_dom"/>
</dbReference>
<dbReference type="InterPro" id="IPR043472">
    <property type="entry name" value="Macro_dom-like"/>
</dbReference>
<dbReference type="PANTHER" id="PTHR11106">
    <property type="entry name" value="GANGLIOSIDE INDUCED DIFFERENTIATION ASSOCIATED PROTEIN 2-RELATED"/>
    <property type="match status" value="1"/>
</dbReference>
<dbReference type="PANTHER" id="PTHR11106:SF111">
    <property type="entry name" value="MACRO DOMAIN-CONTAINING PROTEIN"/>
    <property type="match status" value="1"/>
</dbReference>
<dbReference type="Pfam" id="PF01661">
    <property type="entry name" value="Macro"/>
    <property type="match status" value="1"/>
</dbReference>
<dbReference type="SMART" id="SM00506">
    <property type="entry name" value="A1pp"/>
    <property type="match status" value="1"/>
</dbReference>
<dbReference type="SUPFAM" id="SSF52949">
    <property type="entry name" value="Macro domain-like"/>
    <property type="match status" value="1"/>
</dbReference>
<dbReference type="PROSITE" id="PS51154">
    <property type="entry name" value="MACRO"/>
    <property type="match status" value="1"/>
</dbReference>
<protein>
    <recommendedName>
        <fullName>Uncharacterized protein Mb1934c</fullName>
    </recommendedName>
</protein>
<reference key="1">
    <citation type="journal article" date="2003" name="Proc. Natl. Acad. Sci. U.S.A.">
        <title>The complete genome sequence of Mycobacterium bovis.</title>
        <authorList>
            <person name="Garnier T."/>
            <person name="Eiglmeier K."/>
            <person name="Camus J.-C."/>
            <person name="Medina N."/>
            <person name="Mansoor H."/>
            <person name="Pryor M."/>
            <person name="Duthoy S."/>
            <person name="Grondin S."/>
            <person name="Lacroix C."/>
            <person name="Monsempe C."/>
            <person name="Simon S."/>
            <person name="Harris B."/>
            <person name="Atkin R."/>
            <person name="Doggett J."/>
            <person name="Mayes R."/>
            <person name="Keating L."/>
            <person name="Wheeler P.R."/>
            <person name="Parkhill J."/>
            <person name="Barrell B.G."/>
            <person name="Cole S.T."/>
            <person name="Gordon S.V."/>
            <person name="Hewinson R.G."/>
        </authorList>
    </citation>
    <scope>NUCLEOTIDE SEQUENCE [LARGE SCALE GENOMIC DNA]</scope>
    <source>
        <strain>ATCC BAA-935 / AF2122/97</strain>
    </source>
</reference>
<reference key="2">
    <citation type="journal article" date="2017" name="Genome Announc.">
        <title>Updated reference genome sequence and annotation of Mycobacterium bovis AF2122/97.</title>
        <authorList>
            <person name="Malone K.M."/>
            <person name="Farrell D."/>
            <person name="Stuber T.P."/>
            <person name="Schubert O.T."/>
            <person name="Aebersold R."/>
            <person name="Robbe-Austerman S."/>
            <person name="Gordon S.V."/>
        </authorList>
    </citation>
    <scope>NUCLEOTIDE SEQUENCE [LARGE SCALE GENOMIC DNA]</scope>
    <scope>GENOME REANNOTATION</scope>
    <source>
        <strain>ATCC BAA-935 / AF2122/97</strain>
    </source>
</reference>
<sequence length="358" mass="36405">MSRAAGLPRLSWFAGLTWFAGGSTGAGCAAHPALAGLTAGARCPAYAAISASTARPAATALPAVAASTARPAATAGTTPATGASGSARPTDAAGMADLARPGVVATHAVRTLGTTGSRAIGLCPCQPLDCPRSPQATPNLGSMGRSLDGPQWRRARVRLCGRWWRRSNTTRGASPRPPSTCRGDNVSMIELEVHQADVTKLELDAITNAANTRLRHAGGVAAAIARAGGPELQRESTEKAPIGLGEAVETTAGDMPARYVIHAATMELGGPTSGEIITAATAATLRKADELGCRSLALVAFGTGVGGFPLDDAARLMVGAVRRHRPGSLQRVVFAVHGDAAERAFSAAIQAGEDTARR</sequence>
<name>Y1934_MYCBO</name>
<accession>Q7TZB9</accession>
<accession>A0A1R3Y018</accession>
<accession>X2BIV1</accession>
<evidence type="ECO:0000255" key="1">
    <source>
        <dbReference type="PROSITE-ProRule" id="PRU00490"/>
    </source>
</evidence>
<evidence type="ECO:0000256" key="2">
    <source>
        <dbReference type="SAM" id="MobiDB-lite"/>
    </source>
</evidence>
<organism>
    <name type="scientific">Mycobacterium bovis (strain ATCC BAA-935 / AF2122/97)</name>
    <dbReference type="NCBI Taxonomy" id="233413"/>
    <lineage>
        <taxon>Bacteria</taxon>
        <taxon>Bacillati</taxon>
        <taxon>Actinomycetota</taxon>
        <taxon>Actinomycetes</taxon>
        <taxon>Mycobacteriales</taxon>
        <taxon>Mycobacteriaceae</taxon>
        <taxon>Mycobacterium</taxon>
        <taxon>Mycobacterium tuberculosis complex</taxon>
    </lineage>
</organism>
<proteinExistence type="predicted"/>
<gene>
    <name type="primary">lppD</name>
    <name type="ordered locus">BQ2027_MB1934C</name>
</gene>
<feature type="chain" id="PRO_0000089201" description="Uncharacterized protein Mb1934c">
    <location>
        <begin position="1"/>
        <end position="358"/>
    </location>
</feature>
<feature type="domain" description="Macro" evidence="1">
    <location>
        <begin position="178"/>
        <end position="353"/>
    </location>
</feature>
<feature type="region of interest" description="Disordered" evidence="2">
    <location>
        <begin position="70"/>
        <end position="93"/>
    </location>
</feature>
<feature type="compositionally biased region" description="Low complexity" evidence="2">
    <location>
        <begin position="70"/>
        <end position="88"/>
    </location>
</feature>
<keyword id="KW-1185">Reference proteome</keyword>